<comment type="function">
    <text evidence="1">Involved in protein export. Acts as a chaperone by maintaining the newly synthesized protein in an open conformation. Functions as a peptidyl-prolyl cis-trans isomerase.</text>
</comment>
<comment type="catalytic activity">
    <reaction evidence="1">
        <text>[protein]-peptidylproline (omega=180) = [protein]-peptidylproline (omega=0)</text>
        <dbReference type="Rhea" id="RHEA:16237"/>
        <dbReference type="Rhea" id="RHEA-COMP:10747"/>
        <dbReference type="Rhea" id="RHEA-COMP:10748"/>
        <dbReference type="ChEBI" id="CHEBI:83833"/>
        <dbReference type="ChEBI" id="CHEBI:83834"/>
        <dbReference type="EC" id="5.2.1.8"/>
    </reaction>
</comment>
<comment type="subcellular location">
    <subcellularLocation>
        <location>Cytoplasm</location>
    </subcellularLocation>
    <text evidence="1">About half TF is bound to the ribosome near the polypeptide exit tunnel while the other half is free in the cytoplasm.</text>
</comment>
<comment type="domain">
    <text evidence="1">Consists of 3 domains; the N-terminus binds the ribosome, the middle domain has PPIase activity, while the C-terminus has intrinsic chaperone activity on its own.</text>
</comment>
<comment type="similarity">
    <text evidence="1">Belongs to the FKBP-type PPIase family. Tig subfamily.</text>
</comment>
<gene>
    <name evidence="1" type="primary">tig</name>
    <name type="ordered locus">LCABL_15600</name>
</gene>
<organism>
    <name type="scientific">Lacticaseibacillus casei (strain BL23)</name>
    <name type="common">Lactobacillus casei</name>
    <dbReference type="NCBI Taxonomy" id="543734"/>
    <lineage>
        <taxon>Bacteria</taxon>
        <taxon>Bacillati</taxon>
        <taxon>Bacillota</taxon>
        <taxon>Bacilli</taxon>
        <taxon>Lactobacillales</taxon>
        <taxon>Lactobacillaceae</taxon>
        <taxon>Lacticaseibacillus</taxon>
    </lineage>
</organism>
<dbReference type="EC" id="5.2.1.8" evidence="1"/>
<dbReference type="EMBL" id="FM177140">
    <property type="protein sequence ID" value="CAQ66641.1"/>
    <property type="molecule type" value="Genomic_DNA"/>
</dbReference>
<dbReference type="SMR" id="B3WE40"/>
<dbReference type="KEGG" id="lcb:LCABL_15600"/>
<dbReference type="HOGENOM" id="CLU_033058_3_2_9"/>
<dbReference type="GO" id="GO:0005737">
    <property type="term" value="C:cytoplasm"/>
    <property type="evidence" value="ECO:0007669"/>
    <property type="project" value="UniProtKB-SubCell"/>
</dbReference>
<dbReference type="GO" id="GO:0003755">
    <property type="term" value="F:peptidyl-prolyl cis-trans isomerase activity"/>
    <property type="evidence" value="ECO:0007669"/>
    <property type="project" value="UniProtKB-UniRule"/>
</dbReference>
<dbReference type="GO" id="GO:0044183">
    <property type="term" value="F:protein folding chaperone"/>
    <property type="evidence" value="ECO:0007669"/>
    <property type="project" value="TreeGrafter"/>
</dbReference>
<dbReference type="GO" id="GO:0043022">
    <property type="term" value="F:ribosome binding"/>
    <property type="evidence" value="ECO:0007669"/>
    <property type="project" value="TreeGrafter"/>
</dbReference>
<dbReference type="GO" id="GO:0051083">
    <property type="term" value="P:'de novo' cotranslational protein folding"/>
    <property type="evidence" value="ECO:0007669"/>
    <property type="project" value="TreeGrafter"/>
</dbReference>
<dbReference type="GO" id="GO:0051301">
    <property type="term" value="P:cell division"/>
    <property type="evidence" value="ECO:0007669"/>
    <property type="project" value="UniProtKB-KW"/>
</dbReference>
<dbReference type="GO" id="GO:0061077">
    <property type="term" value="P:chaperone-mediated protein folding"/>
    <property type="evidence" value="ECO:0007669"/>
    <property type="project" value="TreeGrafter"/>
</dbReference>
<dbReference type="GO" id="GO:0015031">
    <property type="term" value="P:protein transport"/>
    <property type="evidence" value="ECO:0007669"/>
    <property type="project" value="UniProtKB-UniRule"/>
</dbReference>
<dbReference type="GO" id="GO:0043335">
    <property type="term" value="P:protein unfolding"/>
    <property type="evidence" value="ECO:0007669"/>
    <property type="project" value="TreeGrafter"/>
</dbReference>
<dbReference type="FunFam" id="3.10.50.40:FF:000001">
    <property type="entry name" value="Trigger factor"/>
    <property type="match status" value="1"/>
</dbReference>
<dbReference type="Gene3D" id="3.10.50.40">
    <property type="match status" value="1"/>
</dbReference>
<dbReference type="Gene3D" id="3.30.70.1050">
    <property type="entry name" value="Trigger factor ribosome-binding domain"/>
    <property type="match status" value="1"/>
</dbReference>
<dbReference type="Gene3D" id="1.10.3120.10">
    <property type="entry name" value="Trigger factor, C-terminal domain"/>
    <property type="match status" value="1"/>
</dbReference>
<dbReference type="HAMAP" id="MF_00303">
    <property type="entry name" value="Trigger_factor_Tig"/>
    <property type="match status" value="1"/>
</dbReference>
<dbReference type="InterPro" id="IPR046357">
    <property type="entry name" value="PPIase_dom_sf"/>
</dbReference>
<dbReference type="InterPro" id="IPR001179">
    <property type="entry name" value="PPIase_FKBP_dom"/>
</dbReference>
<dbReference type="InterPro" id="IPR005215">
    <property type="entry name" value="Trig_fac"/>
</dbReference>
<dbReference type="InterPro" id="IPR008880">
    <property type="entry name" value="Trigger_fac_C"/>
</dbReference>
<dbReference type="InterPro" id="IPR037041">
    <property type="entry name" value="Trigger_fac_C_sf"/>
</dbReference>
<dbReference type="InterPro" id="IPR008881">
    <property type="entry name" value="Trigger_fac_ribosome-bd_bac"/>
</dbReference>
<dbReference type="InterPro" id="IPR036611">
    <property type="entry name" value="Trigger_fac_ribosome-bd_sf"/>
</dbReference>
<dbReference type="InterPro" id="IPR027304">
    <property type="entry name" value="Trigger_fact/SurA_dom_sf"/>
</dbReference>
<dbReference type="NCBIfam" id="TIGR00115">
    <property type="entry name" value="tig"/>
    <property type="match status" value="1"/>
</dbReference>
<dbReference type="PANTHER" id="PTHR30560">
    <property type="entry name" value="TRIGGER FACTOR CHAPERONE AND PEPTIDYL-PROLYL CIS/TRANS ISOMERASE"/>
    <property type="match status" value="1"/>
</dbReference>
<dbReference type="PANTHER" id="PTHR30560:SF3">
    <property type="entry name" value="TRIGGER FACTOR-LIKE PROTEIN TIG, CHLOROPLASTIC"/>
    <property type="match status" value="1"/>
</dbReference>
<dbReference type="Pfam" id="PF00254">
    <property type="entry name" value="FKBP_C"/>
    <property type="match status" value="1"/>
</dbReference>
<dbReference type="Pfam" id="PF05698">
    <property type="entry name" value="Trigger_C"/>
    <property type="match status" value="1"/>
</dbReference>
<dbReference type="Pfam" id="PF05697">
    <property type="entry name" value="Trigger_N"/>
    <property type="match status" value="1"/>
</dbReference>
<dbReference type="PIRSF" id="PIRSF003095">
    <property type="entry name" value="Trigger_factor"/>
    <property type="match status" value="1"/>
</dbReference>
<dbReference type="SUPFAM" id="SSF54534">
    <property type="entry name" value="FKBP-like"/>
    <property type="match status" value="1"/>
</dbReference>
<dbReference type="SUPFAM" id="SSF109998">
    <property type="entry name" value="Triger factor/SurA peptide-binding domain-like"/>
    <property type="match status" value="1"/>
</dbReference>
<dbReference type="SUPFAM" id="SSF102735">
    <property type="entry name" value="Trigger factor ribosome-binding domain"/>
    <property type="match status" value="1"/>
</dbReference>
<dbReference type="PROSITE" id="PS50059">
    <property type="entry name" value="FKBP_PPIASE"/>
    <property type="match status" value="1"/>
</dbReference>
<reference key="1">
    <citation type="submission" date="2008-06" db="EMBL/GenBank/DDBJ databases">
        <title>Lactobacillus casei BL23 complete genome sequence.</title>
        <authorList>
            <person name="Maze A."/>
            <person name="Boel G."/>
            <person name="Bourand A."/>
            <person name="Loux V."/>
            <person name="Gibrat J.F."/>
            <person name="Zuniga M."/>
            <person name="Hartke A."/>
            <person name="Deutscher J."/>
        </authorList>
    </citation>
    <scope>NUCLEOTIDE SEQUENCE [LARGE SCALE GENOMIC DNA]</scope>
    <source>
        <strain>BL23</strain>
    </source>
</reference>
<feature type="chain" id="PRO_1000115546" description="Trigger factor">
    <location>
        <begin position="1"/>
        <end position="445"/>
    </location>
</feature>
<feature type="domain" description="PPIase FKBP-type" evidence="1">
    <location>
        <begin position="163"/>
        <end position="248"/>
    </location>
</feature>
<feature type="region of interest" description="Disordered" evidence="2">
    <location>
        <begin position="425"/>
        <end position="445"/>
    </location>
</feature>
<keyword id="KW-0131">Cell cycle</keyword>
<keyword id="KW-0132">Cell division</keyword>
<keyword id="KW-0143">Chaperone</keyword>
<keyword id="KW-0963">Cytoplasm</keyword>
<keyword id="KW-0413">Isomerase</keyword>
<keyword id="KW-0697">Rotamase</keyword>
<sequence>MSAKWEKKGTNDGELTFEIDLPQIQQGLDQAFQRVRKNLTVPGFRKGKVSRTVFKRMYGDAALYEDALNILLPDAYEAAVKESGIDPVDQPQINVDSMDEGKPWVIKATVTVKPEVTLGQYKGLEVPKQNVEVSAKDIDAELEKRREQQAELVVKDDKAAENGDTVVIDYVGTIDGTEFDGGSSKNYSLELGSNSFIPGFEEQLVGHKSGDEVTVNVTFPEDYKAADLAGKAAEFKTTIHEVKVKELPALDDDFAKDLDDDVDTLDELKAKIKKELTDQREEAAKNAVQEAAIKEATDNATIKEVPNAMIEQEVHNQMDQYLGNMQRQGISPKMYYQLTGTSEDDLHKQFEADAATRVRTNLVLEAIVKAEDIQPTEDQVNEEVKNLASEYNMDEKAVRKALSEDMLKHDIGVKQAIDIITDSAKEVESAKDDADKEASDAKADK</sequence>
<evidence type="ECO:0000255" key="1">
    <source>
        <dbReference type="HAMAP-Rule" id="MF_00303"/>
    </source>
</evidence>
<evidence type="ECO:0000256" key="2">
    <source>
        <dbReference type="SAM" id="MobiDB-lite"/>
    </source>
</evidence>
<protein>
    <recommendedName>
        <fullName evidence="1">Trigger factor</fullName>
        <shortName evidence="1">TF</shortName>
        <ecNumber evidence="1">5.2.1.8</ecNumber>
    </recommendedName>
    <alternativeName>
        <fullName evidence="1">PPIase</fullName>
    </alternativeName>
</protein>
<name>TIG_LACCB</name>
<proteinExistence type="inferred from homology"/>
<accession>B3WE40</accession>